<feature type="chain" id="PRO_0000291054" description="UPF0434 protein APH_0052">
    <location>
        <begin position="1"/>
        <end position="71"/>
    </location>
</feature>
<feature type="region of interest" description="Disordered" evidence="2">
    <location>
        <begin position="52"/>
        <end position="71"/>
    </location>
</feature>
<feature type="compositionally biased region" description="Basic and acidic residues" evidence="2">
    <location>
        <begin position="52"/>
        <end position="63"/>
    </location>
</feature>
<accession>Q2GLR6</accession>
<sequence length="71" mass="7866">MLDKKVLEILVCPLTGGKLSYDTERAELISHEAGLAYPVRDGIPIMLVDEARKLQPEEPKEGSELQSSDNQ</sequence>
<reference key="1">
    <citation type="journal article" date="2006" name="PLoS Genet.">
        <title>Comparative genomics of emerging human ehrlichiosis agents.</title>
        <authorList>
            <person name="Dunning Hotopp J.C."/>
            <person name="Lin M."/>
            <person name="Madupu R."/>
            <person name="Crabtree J."/>
            <person name="Angiuoli S.V."/>
            <person name="Eisen J.A."/>
            <person name="Seshadri R."/>
            <person name="Ren Q."/>
            <person name="Wu M."/>
            <person name="Utterback T.R."/>
            <person name="Smith S."/>
            <person name="Lewis M."/>
            <person name="Khouri H."/>
            <person name="Zhang C."/>
            <person name="Niu H."/>
            <person name="Lin Q."/>
            <person name="Ohashi N."/>
            <person name="Zhi N."/>
            <person name="Nelson W.C."/>
            <person name="Brinkac L.M."/>
            <person name="Dodson R.J."/>
            <person name="Rosovitz M.J."/>
            <person name="Sundaram J.P."/>
            <person name="Daugherty S.C."/>
            <person name="Davidsen T."/>
            <person name="Durkin A.S."/>
            <person name="Gwinn M.L."/>
            <person name="Haft D.H."/>
            <person name="Selengut J.D."/>
            <person name="Sullivan S.A."/>
            <person name="Zafar N."/>
            <person name="Zhou L."/>
            <person name="Benahmed F."/>
            <person name="Forberger H."/>
            <person name="Halpin R."/>
            <person name="Mulligan S."/>
            <person name="Robinson J."/>
            <person name="White O."/>
            <person name="Rikihisa Y."/>
            <person name="Tettelin H."/>
        </authorList>
    </citation>
    <scope>NUCLEOTIDE SEQUENCE [LARGE SCALE GENOMIC DNA]</scope>
    <source>
        <strain>HZ</strain>
    </source>
</reference>
<dbReference type="EMBL" id="CP000235">
    <property type="protein sequence ID" value="ABD43656.1"/>
    <property type="molecule type" value="Genomic_DNA"/>
</dbReference>
<dbReference type="RefSeq" id="WP_011450211.1">
    <property type="nucleotide sequence ID" value="NC_007797.1"/>
</dbReference>
<dbReference type="SMR" id="Q2GLR6"/>
<dbReference type="STRING" id="212042.APH_0052"/>
<dbReference type="PaxDb" id="212042-APH_0052"/>
<dbReference type="EnsemblBacteria" id="ABD43656">
    <property type="protein sequence ID" value="ABD43656"/>
    <property type="gene ID" value="APH_0052"/>
</dbReference>
<dbReference type="KEGG" id="aph:APH_0052"/>
<dbReference type="eggNOG" id="COG2835">
    <property type="taxonomic scope" value="Bacteria"/>
</dbReference>
<dbReference type="HOGENOM" id="CLU_155659_2_2_5"/>
<dbReference type="Proteomes" id="UP000001943">
    <property type="component" value="Chromosome"/>
</dbReference>
<dbReference type="GO" id="GO:0005829">
    <property type="term" value="C:cytosol"/>
    <property type="evidence" value="ECO:0007669"/>
    <property type="project" value="TreeGrafter"/>
</dbReference>
<dbReference type="FunFam" id="2.20.25.10:FF:000002">
    <property type="entry name" value="UPF0434 protein YcaR"/>
    <property type="match status" value="1"/>
</dbReference>
<dbReference type="Gene3D" id="2.20.25.10">
    <property type="match status" value="1"/>
</dbReference>
<dbReference type="HAMAP" id="MF_01187">
    <property type="entry name" value="UPF0434"/>
    <property type="match status" value="1"/>
</dbReference>
<dbReference type="InterPro" id="IPR005651">
    <property type="entry name" value="Trm112-like"/>
</dbReference>
<dbReference type="PANTHER" id="PTHR33505:SF4">
    <property type="entry name" value="PROTEIN PREY, MITOCHONDRIAL"/>
    <property type="match status" value="1"/>
</dbReference>
<dbReference type="PANTHER" id="PTHR33505">
    <property type="entry name" value="ZGC:162634"/>
    <property type="match status" value="1"/>
</dbReference>
<dbReference type="Pfam" id="PF03966">
    <property type="entry name" value="Trm112p"/>
    <property type="match status" value="1"/>
</dbReference>
<dbReference type="SUPFAM" id="SSF158997">
    <property type="entry name" value="Trm112p-like"/>
    <property type="match status" value="1"/>
</dbReference>
<evidence type="ECO:0000255" key="1">
    <source>
        <dbReference type="HAMAP-Rule" id="MF_01187"/>
    </source>
</evidence>
<evidence type="ECO:0000256" key="2">
    <source>
        <dbReference type="SAM" id="MobiDB-lite"/>
    </source>
</evidence>
<name>Y052_ANAPZ</name>
<comment type="similarity">
    <text evidence="1">Belongs to the UPF0434 family.</text>
</comment>
<gene>
    <name type="ordered locus">APH_0052</name>
</gene>
<organism>
    <name type="scientific">Anaplasma phagocytophilum (strain HZ)</name>
    <dbReference type="NCBI Taxonomy" id="212042"/>
    <lineage>
        <taxon>Bacteria</taxon>
        <taxon>Pseudomonadati</taxon>
        <taxon>Pseudomonadota</taxon>
        <taxon>Alphaproteobacteria</taxon>
        <taxon>Rickettsiales</taxon>
        <taxon>Anaplasmataceae</taxon>
        <taxon>Anaplasma</taxon>
        <taxon>phagocytophilum group</taxon>
    </lineage>
</organism>
<proteinExistence type="inferred from homology"/>
<protein>
    <recommendedName>
        <fullName evidence="1">UPF0434 protein APH_0052</fullName>
    </recommendedName>
</protein>